<keyword id="KW-0963">Cytoplasm</keyword>
<keyword id="KW-0255">Endonuclease</keyword>
<keyword id="KW-0378">Hydrolase</keyword>
<keyword id="KW-0464">Manganese</keyword>
<keyword id="KW-0479">Metal-binding</keyword>
<keyword id="KW-0540">Nuclease</keyword>
<dbReference type="EC" id="3.1.26.4" evidence="1"/>
<dbReference type="EMBL" id="CP000627">
    <property type="protein sequence ID" value="ABQ20049.1"/>
    <property type="molecule type" value="Genomic_DNA"/>
</dbReference>
<dbReference type="EMBL" id="CP001235">
    <property type="protein sequence ID" value="ACP10352.1"/>
    <property type="molecule type" value="Genomic_DNA"/>
</dbReference>
<dbReference type="RefSeq" id="WP_001085485.1">
    <property type="nucleotide sequence ID" value="NZ_JAACZH010000008.1"/>
</dbReference>
<dbReference type="SMR" id="A5F626"/>
<dbReference type="KEGG" id="vco:VC0395_A1837"/>
<dbReference type="KEGG" id="vcr:VC395_2362"/>
<dbReference type="PATRIC" id="fig|345073.21.peg.2277"/>
<dbReference type="eggNOG" id="COG0164">
    <property type="taxonomic scope" value="Bacteria"/>
</dbReference>
<dbReference type="HOGENOM" id="CLU_036532_3_2_6"/>
<dbReference type="OrthoDB" id="9803420at2"/>
<dbReference type="Proteomes" id="UP000000249">
    <property type="component" value="Chromosome 2"/>
</dbReference>
<dbReference type="GO" id="GO:0005737">
    <property type="term" value="C:cytoplasm"/>
    <property type="evidence" value="ECO:0007669"/>
    <property type="project" value="UniProtKB-SubCell"/>
</dbReference>
<dbReference type="GO" id="GO:0032299">
    <property type="term" value="C:ribonuclease H2 complex"/>
    <property type="evidence" value="ECO:0007669"/>
    <property type="project" value="TreeGrafter"/>
</dbReference>
<dbReference type="GO" id="GO:0030145">
    <property type="term" value="F:manganese ion binding"/>
    <property type="evidence" value="ECO:0007669"/>
    <property type="project" value="UniProtKB-UniRule"/>
</dbReference>
<dbReference type="GO" id="GO:0003723">
    <property type="term" value="F:RNA binding"/>
    <property type="evidence" value="ECO:0007669"/>
    <property type="project" value="InterPro"/>
</dbReference>
<dbReference type="GO" id="GO:0004523">
    <property type="term" value="F:RNA-DNA hybrid ribonuclease activity"/>
    <property type="evidence" value="ECO:0007669"/>
    <property type="project" value="UniProtKB-UniRule"/>
</dbReference>
<dbReference type="GO" id="GO:0043137">
    <property type="term" value="P:DNA replication, removal of RNA primer"/>
    <property type="evidence" value="ECO:0007669"/>
    <property type="project" value="TreeGrafter"/>
</dbReference>
<dbReference type="GO" id="GO:0006298">
    <property type="term" value="P:mismatch repair"/>
    <property type="evidence" value="ECO:0007669"/>
    <property type="project" value="TreeGrafter"/>
</dbReference>
<dbReference type="CDD" id="cd07182">
    <property type="entry name" value="RNase_HII_bacteria_HII_like"/>
    <property type="match status" value="1"/>
</dbReference>
<dbReference type="FunFam" id="3.30.420.10:FF:000006">
    <property type="entry name" value="Ribonuclease HII"/>
    <property type="match status" value="1"/>
</dbReference>
<dbReference type="Gene3D" id="3.30.420.10">
    <property type="entry name" value="Ribonuclease H-like superfamily/Ribonuclease H"/>
    <property type="match status" value="1"/>
</dbReference>
<dbReference type="HAMAP" id="MF_00052_B">
    <property type="entry name" value="RNase_HII_B"/>
    <property type="match status" value="1"/>
</dbReference>
<dbReference type="InterPro" id="IPR022898">
    <property type="entry name" value="RNase_HII"/>
</dbReference>
<dbReference type="InterPro" id="IPR001352">
    <property type="entry name" value="RNase_HII/HIII"/>
</dbReference>
<dbReference type="InterPro" id="IPR024567">
    <property type="entry name" value="RNase_HII/HIII_dom"/>
</dbReference>
<dbReference type="InterPro" id="IPR012337">
    <property type="entry name" value="RNaseH-like_sf"/>
</dbReference>
<dbReference type="InterPro" id="IPR036397">
    <property type="entry name" value="RNaseH_sf"/>
</dbReference>
<dbReference type="NCBIfam" id="NF000594">
    <property type="entry name" value="PRK00015.1-1"/>
    <property type="match status" value="1"/>
</dbReference>
<dbReference type="NCBIfam" id="NF000595">
    <property type="entry name" value="PRK00015.1-3"/>
    <property type="match status" value="1"/>
</dbReference>
<dbReference type="NCBIfam" id="NF000596">
    <property type="entry name" value="PRK00015.1-4"/>
    <property type="match status" value="1"/>
</dbReference>
<dbReference type="PANTHER" id="PTHR10954">
    <property type="entry name" value="RIBONUCLEASE H2 SUBUNIT A"/>
    <property type="match status" value="1"/>
</dbReference>
<dbReference type="PANTHER" id="PTHR10954:SF18">
    <property type="entry name" value="RIBONUCLEASE HII"/>
    <property type="match status" value="1"/>
</dbReference>
<dbReference type="Pfam" id="PF01351">
    <property type="entry name" value="RNase_HII"/>
    <property type="match status" value="1"/>
</dbReference>
<dbReference type="SUPFAM" id="SSF53098">
    <property type="entry name" value="Ribonuclease H-like"/>
    <property type="match status" value="1"/>
</dbReference>
<dbReference type="PROSITE" id="PS51975">
    <property type="entry name" value="RNASE_H_2"/>
    <property type="match status" value="1"/>
</dbReference>
<accession>A5F626</accession>
<accession>C3M3K3</accession>
<reference key="1">
    <citation type="submission" date="2007-03" db="EMBL/GenBank/DDBJ databases">
        <authorList>
            <person name="Heidelberg J."/>
        </authorList>
    </citation>
    <scope>NUCLEOTIDE SEQUENCE [LARGE SCALE GENOMIC DNA]</scope>
    <source>
        <strain>ATCC 39541 / Classical Ogawa 395 / O395</strain>
    </source>
</reference>
<reference key="2">
    <citation type="journal article" date="2008" name="PLoS ONE">
        <title>A recalibrated molecular clock and independent origins for the cholera pandemic clones.</title>
        <authorList>
            <person name="Feng L."/>
            <person name="Reeves P.R."/>
            <person name="Lan R."/>
            <person name="Ren Y."/>
            <person name="Gao C."/>
            <person name="Zhou Z."/>
            <person name="Ren Y."/>
            <person name="Cheng J."/>
            <person name="Wang W."/>
            <person name="Wang J."/>
            <person name="Qian W."/>
            <person name="Li D."/>
            <person name="Wang L."/>
        </authorList>
    </citation>
    <scope>NUCLEOTIDE SEQUENCE [LARGE SCALE GENOMIC DNA]</scope>
    <source>
        <strain>ATCC 39541 / Classical Ogawa 395 / O395</strain>
    </source>
</reference>
<organism>
    <name type="scientific">Vibrio cholerae serotype O1 (strain ATCC 39541 / Classical Ogawa 395 / O395)</name>
    <dbReference type="NCBI Taxonomy" id="345073"/>
    <lineage>
        <taxon>Bacteria</taxon>
        <taxon>Pseudomonadati</taxon>
        <taxon>Pseudomonadota</taxon>
        <taxon>Gammaproteobacteria</taxon>
        <taxon>Vibrionales</taxon>
        <taxon>Vibrionaceae</taxon>
        <taxon>Vibrio</taxon>
    </lineage>
</organism>
<proteinExistence type="inferred from homology"/>
<feature type="chain" id="PRO_1000071139" description="Ribonuclease HII">
    <location>
        <begin position="1"/>
        <end position="206"/>
    </location>
</feature>
<feature type="domain" description="RNase H type-2" evidence="2">
    <location>
        <begin position="19"/>
        <end position="206"/>
    </location>
</feature>
<feature type="binding site" evidence="1">
    <location>
        <position position="25"/>
    </location>
    <ligand>
        <name>a divalent metal cation</name>
        <dbReference type="ChEBI" id="CHEBI:60240"/>
    </ligand>
</feature>
<feature type="binding site" evidence="1">
    <location>
        <position position="26"/>
    </location>
    <ligand>
        <name>a divalent metal cation</name>
        <dbReference type="ChEBI" id="CHEBI:60240"/>
    </ligand>
</feature>
<feature type="binding site" evidence="1">
    <location>
        <position position="117"/>
    </location>
    <ligand>
        <name>a divalent metal cation</name>
        <dbReference type="ChEBI" id="CHEBI:60240"/>
    </ligand>
</feature>
<sequence>MAKKPSIELPPFEIPAGYALIAGVDEVGRGPLVGDVVTAAVILDPNRPIMGLNDSKKLSEKKRLALFPEIQVKALAWAVGRCSPQEIDELNIFQATMVAMQRAVAGLRIQPDLVLIDGNKIPKLPMEAQAVVKGDLRVAQISAASIIAKVIRDQEMEALDKQYPQFGFAKHKGYPTAAHFAAIEQHGVIEQHRKSFGPVKRALGIE</sequence>
<name>RNH2_VIBC3</name>
<protein>
    <recommendedName>
        <fullName evidence="1">Ribonuclease HII</fullName>
        <shortName evidence="1">RNase HII</shortName>
        <ecNumber evidence="1">3.1.26.4</ecNumber>
    </recommendedName>
</protein>
<gene>
    <name evidence="1" type="primary">rnhB</name>
    <name type="ordered locus">VC0395_A1837</name>
    <name type="ordered locus">VC395_2362</name>
</gene>
<evidence type="ECO:0000255" key="1">
    <source>
        <dbReference type="HAMAP-Rule" id="MF_00052"/>
    </source>
</evidence>
<evidence type="ECO:0000255" key="2">
    <source>
        <dbReference type="PROSITE-ProRule" id="PRU01319"/>
    </source>
</evidence>
<comment type="function">
    <text evidence="1">Endonuclease that specifically degrades the RNA of RNA-DNA hybrids.</text>
</comment>
<comment type="catalytic activity">
    <reaction evidence="1">
        <text>Endonucleolytic cleavage to 5'-phosphomonoester.</text>
        <dbReference type="EC" id="3.1.26.4"/>
    </reaction>
</comment>
<comment type="cofactor">
    <cofactor evidence="1">
        <name>Mn(2+)</name>
        <dbReference type="ChEBI" id="CHEBI:29035"/>
    </cofactor>
    <cofactor evidence="1">
        <name>Mg(2+)</name>
        <dbReference type="ChEBI" id="CHEBI:18420"/>
    </cofactor>
    <text evidence="1">Manganese or magnesium. Binds 1 divalent metal ion per monomer in the absence of substrate. May bind a second metal ion after substrate binding.</text>
</comment>
<comment type="subcellular location">
    <subcellularLocation>
        <location evidence="1">Cytoplasm</location>
    </subcellularLocation>
</comment>
<comment type="similarity">
    <text evidence="1">Belongs to the RNase HII family.</text>
</comment>